<sequence length="379" mass="42871">MSYMNNTFQSNYDYSKDKNFMSTDIGPSMREMKAQKRRSRPMDNPDADNPYIPKFISTAPWYAQDDDAVERLAHQRIGKKETPSGGRSSIEGSWYVRGKKLGPAATKYRKGACENCGAMSHKVKDCMERPRKRGARWTGEDIQADEVIQDINVSWDAKRDRWNGYDATDYKKVIERYEKLDELQNKGEENRDASENSAVKASRNSTVSGSEDSASITTPSLRMREDVVAYLRADNKNLQYEPKSRSMRDETGYHMVDDSSGGAGFVKASGGEKEDFEKLQMFAWEAERSGTRVHVVANPTAGELEFRKNKASRMTTQKHIDQSILDRYGDGTSKVKDKKAKNNEKEVPDLAILDKSEKSKGESNTDEESENLVIVEGDL</sequence>
<keyword id="KW-0479">Metal-binding</keyword>
<keyword id="KW-0507">mRNA processing</keyword>
<keyword id="KW-0508">mRNA splicing</keyword>
<keyword id="KW-0539">Nucleus</keyword>
<keyword id="KW-1185">Reference proteome</keyword>
<keyword id="KW-0747">Spliceosome</keyword>
<keyword id="KW-0862">Zinc</keyword>
<keyword id="KW-0863">Zinc-finger</keyword>
<dbReference type="EMBL" id="CU329671">
    <property type="protein sequence ID" value="CAB44757.1"/>
    <property type="molecule type" value="Genomic_DNA"/>
</dbReference>
<dbReference type="PIR" id="T40312">
    <property type="entry name" value="T40312"/>
</dbReference>
<dbReference type="RefSeq" id="NP_596034.1">
    <property type="nucleotide sequence ID" value="NM_001021944.2"/>
</dbReference>
<dbReference type="SMR" id="Q9Y7Y2"/>
<dbReference type="BioGRID" id="277457">
    <property type="interactions" value="8"/>
</dbReference>
<dbReference type="FunCoup" id="Q9Y7Y2">
    <property type="interactions" value="736"/>
</dbReference>
<dbReference type="IntAct" id="Q9Y7Y2">
    <property type="interactions" value="1"/>
</dbReference>
<dbReference type="STRING" id="284812.Q9Y7Y2"/>
<dbReference type="iPTMnet" id="Q9Y7Y2"/>
<dbReference type="PaxDb" id="4896-SPBC365.05c.1"/>
<dbReference type="EnsemblFungi" id="SPBC365.05c.1">
    <property type="protein sequence ID" value="SPBC365.05c.1:pep"/>
    <property type="gene ID" value="SPBC365.05c"/>
</dbReference>
<dbReference type="GeneID" id="2540941"/>
<dbReference type="KEGG" id="spo:2540941"/>
<dbReference type="PomBase" id="SPBC365.05c">
    <property type="gene designation" value="slu7"/>
</dbReference>
<dbReference type="VEuPathDB" id="FungiDB:SPBC365.05c"/>
<dbReference type="eggNOG" id="KOG2560">
    <property type="taxonomic scope" value="Eukaryota"/>
</dbReference>
<dbReference type="HOGENOM" id="CLU_019317_3_1_1"/>
<dbReference type="InParanoid" id="Q9Y7Y2"/>
<dbReference type="OMA" id="KSKMFRR"/>
<dbReference type="PhylomeDB" id="Q9Y7Y2"/>
<dbReference type="PRO" id="PR:Q9Y7Y2"/>
<dbReference type="Proteomes" id="UP000002485">
    <property type="component" value="Chromosome II"/>
</dbReference>
<dbReference type="GO" id="GO:0005634">
    <property type="term" value="C:nucleus"/>
    <property type="evidence" value="ECO:0000314"/>
    <property type="project" value="PomBase"/>
</dbReference>
<dbReference type="GO" id="GO:0005681">
    <property type="term" value="C:spliceosomal complex"/>
    <property type="evidence" value="ECO:0000314"/>
    <property type="project" value="PomBase"/>
</dbReference>
<dbReference type="GO" id="GO:0030628">
    <property type="term" value="F:pre-mRNA 3'-splice site binding"/>
    <property type="evidence" value="ECO:0007669"/>
    <property type="project" value="InterPro"/>
</dbReference>
<dbReference type="GO" id="GO:0008270">
    <property type="term" value="F:zinc ion binding"/>
    <property type="evidence" value="ECO:0007669"/>
    <property type="project" value="UniProtKB-KW"/>
</dbReference>
<dbReference type="GO" id="GO:0000350">
    <property type="term" value="P:generation of catalytic spliceosome for second transesterification step"/>
    <property type="evidence" value="ECO:0000266"/>
    <property type="project" value="PomBase"/>
</dbReference>
<dbReference type="GO" id="GO:0045292">
    <property type="term" value="P:mRNA cis splicing, via spliceosome"/>
    <property type="evidence" value="ECO:0000315"/>
    <property type="project" value="PomBase"/>
</dbReference>
<dbReference type="GO" id="GO:0008380">
    <property type="term" value="P:RNA splicing"/>
    <property type="evidence" value="ECO:0000318"/>
    <property type="project" value="GO_Central"/>
</dbReference>
<dbReference type="InterPro" id="IPR021715">
    <property type="entry name" value="Slu7_dom"/>
</dbReference>
<dbReference type="InterPro" id="IPR039974">
    <property type="entry name" value="Splicing_factor_SLU7"/>
</dbReference>
<dbReference type="PANTHER" id="PTHR12942:SF2">
    <property type="entry name" value="PRE-MRNA-SPLICING FACTOR SLU7"/>
    <property type="match status" value="1"/>
</dbReference>
<dbReference type="PANTHER" id="PTHR12942">
    <property type="entry name" value="STEP II SPLICING FACTOR SLU7"/>
    <property type="match status" value="1"/>
</dbReference>
<dbReference type="Pfam" id="PF11708">
    <property type="entry name" value="Slu7"/>
    <property type="match status" value="1"/>
</dbReference>
<gene>
    <name type="primary">slu7</name>
    <name type="ORF">SPBC365.05c</name>
</gene>
<organism>
    <name type="scientific">Schizosaccharomyces pombe (strain 972 / ATCC 24843)</name>
    <name type="common">Fission yeast</name>
    <dbReference type="NCBI Taxonomy" id="284812"/>
    <lineage>
        <taxon>Eukaryota</taxon>
        <taxon>Fungi</taxon>
        <taxon>Dikarya</taxon>
        <taxon>Ascomycota</taxon>
        <taxon>Taphrinomycotina</taxon>
        <taxon>Schizosaccharomycetes</taxon>
        <taxon>Schizosaccharomycetales</taxon>
        <taxon>Schizosaccharomycetaceae</taxon>
        <taxon>Schizosaccharomyces</taxon>
    </lineage>
</organism>
<reference key="1">
    <citation type="journal article" date="2002" name="Nature">
        <title>The genome sequence of Schizosaccharomyces pombe.</title>
        <authorList>
            <person name="Wood V."/>
            <person name="Gwilliam R."/>
            <person name="Rajandream M.A."/>
            <person name="Lyne M.H."/>
            <person name="Lyne R."/>
            <person name="Stewart A."/>
            <person name="Sgouros J.G."/>
            <person name="Peat N."/>
            <person name="Hayles J."/>
            <person name="Baker S.G."/>
            <person name="Basham D."/>
            <person name="Bowman S."/>
            <person name="Brooks K."/>
            <person name="Brown D."/>
            <person name="Brown S."/>
            <person name="Chillingworth T."/>
            <person name="Churcher C.M."/>
            <person name="Collins M."/>
            <person name="Connor R."/>
            <person name="Cronin A."/>
            <person name="Davis P."/>
            <person name="Feltwell T."/>
            <person name="Fraser A."/>
            <person name="Gentles S."/>
            <person name="Goble A."/>
            <person name="Hamlin N."/>
            <person name="Harris D.E."/>
            <person name="Hidalgo J."/>
            <person name="Hodgson G."/>
            <person name="Holroyd S."/>
            <person name="Hornsby T."/>
            <person name="Howarth S."/>
            <person name="Huckle E.J."/>
            <person name="Hunt S."/>
            <person name="Jagels K."/>
            <person name="James K.D."/>
            <person name="Jones L."/>
            <person name="Jones M."/>
            <person name="Leather S."/>
            <person name="McDonald S."/>
            <person name="McLean J."/>
            <person name="Mooney P."/>
            <person name="Moule S."/>
            <person name="Mungall K.L."/>
            <person name="Murphy L.D."/>
            <person name="Niblett D."/>
            <person name="Odell C."/>
            <person name="Oliver K."/>
            <person name="O'Neil S."/>
            <person name="Pearson D."/>
            <person name="Quail M.A."/>
            <person name="Rabbinowitsch E."/>
            <person name="Rutherford K.M."/>
            <person name="Rutter S."/>
            <person name="Saunders D."/>
            <person name="Seeger K."/>
            <person name="Sharp S."/>
            <person name="Skelton J."/>
            <person name="Simmonds M.N."/>
            <person name="Squares R."/>
            <person name="Squares S."/>
            <person name="Stevens K."/>
            <person name="Taylor K."/>
            <person name="Taylor R.G."/>
            <person name="Tivey A."/>
            <person name="Walsh S.V."/>
            <person name="Warren T."/>
            <person name="Whitehead S."/>
            <person name="Woodward J.R."/>
            <person name="Volckaert G."/>
            <person name="Aert R."/>
            <person name="Robben J."/>
            <person name="Grymonprez B."/>
            <person name="Weltjens I."/>
            <person name="Vanstreels E."/>
            <person name="Rieger M."/>
            <person name="Schaefer M."/>
            <person name="Mueller-Auer S."/>
            <person name="Gabel C."/>
            <person name="Fuchs M."/>
            <person name="Duesterhoeft A."/>
            <person name="Fritzc C."/>
            <person name="Holzer E."/>
            <person name="Moestl D."/>
            <person name="Hilbert H."/>
            <person name="Borzym K."/>
            <person name="Langer I."/>
            <person name="Beck A."/>
            <person name="Lehrach H."/>
            <person name="Reinhardt R."/>
            <person name="Pohl T.M."/>
            <person name="Eger P."/>
            <person name="Zimmermann W."/>
            <person name="Wedler H."/>
            <person name="Wambutt R."/>
            <person name="Purnelle B."/>
            <person name="Goffeau A."/>
            <person name="Cadieu E."/>
            <person name="Dreano S."/>
            <person name="Gloux S."/>
            <person name="Lelaure V."/>
            <person name="Mottier S."/>
            <person name="Galibert F."/>
            <person name="Aves S.J."/>
            <person name="Xiang Z."/>
            <person name="Hunt C."/>
            <person name="Moore K."/>
            <person name="Hurst S.M."/>
            <person name="Lucas M."/>
            <person name="Rochet M."/>
            <person name="Gaillardin C."/>
            <person name="Tallada V.A."/>
            <person name="Garzon A."/>
            <person name="Thode G."/>
            <person name="Daga R.R."/>
            <person name="Cruzado L."/>
            <person name="Jimenez J."/>
            <person name="Sanchez M."/>
            <person name="del Rey F."/>
            <person name="Benito J."/>
            <person name="Dominguez A."/>
            <person name="Revuelta J.L."/>
            <person name="Moreno S."/>
            <person name="Armstrong J."/>
            <person name="Forsburg S.L."/>
            <person name="Cerutti L."/>
            <person name="Lowe T."/>
            <person name="McCombie W.R."/>
            <person name="Paulsen I."/>
            <person name="Potashkin J."/>
            <person name="Shpakovski G.V."/>
            <person name="Ussery D."/>
            <person name="Barrell B.G."/>
            <person name="Nurse P."/>
        </authorList>
    </citation>
    <scope>NUCLEOTIDE SEQUENCE [LARGE SCALE GENOMIC DNA]</scope>
    <source>
        <strain>972 / ATCC 24843</strain>
    </source>
</reference>
<reference key="2">
    <citation type="journal article" date="2002" name="Mol. Cell. Biol.">
        <title>Proteomics analysis reveals stable multiprotein complexes in both fission and budding yeasts containing Myb-related Cdc5p/Cef1p, novel pre-mRNA splicing factors, and snRNAs.</title>
        <authorList>
            <person name="Ohi M.D."/>
            <person name="Link A.J."/>
            <person name="Ren L."/>
            <person name="Jennings J.L."/>
            <person name="McDonald W.H."/>
            <person name="Gould K.L."/>
        </authorList>
    </citation>
    <scope>IDENTIFICATION IN THE CWF COMPLEX</scope>
    <scope>IDENTIFICATION BY MASS SPECTROMETRY</scope>
</reference>
<feature type="chain" id="PRO_0000218552" description="Pre-mRNA-splicing factor slu7">
    <location>
        <begin position="1"/>
        <end position="379"/>
    </location>
</feature>
<feature type="zinc finger region" description="CCHC-type">
    <location>
        <begin position="111"/>
        <end position="128"/>
    </location>
</feature>
<feature type="region of interest" description="Disordered" evidence="2">
    <location>
        <begin position="23"/>
        <end position="50"/>
    </location>
</feature>
<feature type="region of interest" description="Disordered" evidence="2">
    <location>
        <begin position="184"/>
        <end position="217"/>
    </location>
</feature>
<feature type="region of interest" description="Disordered" evidence="2">
    <location>
        <begin position="309"/>
        <end position="379"/>
    </location>
</feature>
<feature type="compositionally biased region" description="Basic and acidic residues" evidence="2">
    <location>
        <begin position="184"/>
        <end position="194"/>
    </location>
</feature>
<feature type="compositionally biased region" description="Polar residues" evidence="2">
    <location>
        <begin position="195"/>
        <end position="217"/>
    </location>
</feature>
<feature type="compositionally biased region" description="Basic and acidic residues" evidence="2">
    <location>
        <begin position="327"/>
        <end position="363"/>
    </location>
</feature>
<protein>
    <recommendedName>
        <fullName>Pre-mRNA-splicing factor slu7</fullName>
    </recommendedName>
</protein>
<evidence type="ECO:0000250" key="1"/>
<evidence type="ECO:0000256" key="2">
    <source>
        <dbReference type="SAM" id="MobiDB-lite"/>
    </source>
</evidence>
<evidence type="ECO:0000269" key="3">
    <source>
    </source>
</evidence>
<evidence type="ECO:0000305" key="4"/>
<proteinExistence type="evidence at protein level"/>
<accession>Q9Y7Y2</accession>
<comment type="function">
    <text evidence="1">Involved in pre-mRNA splicing.</text>
</comment>
<comment type="subunit">
    <text evidence="3">Belongs to the 40S cdc5-associated complex (or cwf complex), a spliceosome sub-complex reminiscent of a late-stage spliceosome composed of the U2, U5 and U6 snRNAs and at least brr2, cdc5, cwf2/prp3, cwf3/syf1, cwf4/syf3, cwf5/ecm2, spp42/cwf6, cwf7/spf27, cwf8, cwf9, cwf10, cwf11, cwf12, prp45/cwf13, cwf14, cwf15, cwf16, cwf17, cwf18, cwf19, cwf20, cwf21, cwf22, cwf23, cwf24, cwf25, cwf26, cyp7/cwf27, cwf28, cwf29/ist3, lea1, msl1, prp5/cwf1, prp10, prp12/sap130, prp17, prp22, sap61, sap62, sap114, sap145, slu7, smb1, smd1, smd3, smf1, smg1 and syf2.</text>
</comment>
<comment type="subcellular location">
    <subcellularLocation>
        <location evidence="1">Nucleus</location>
    </subcellularLocation>
</comment>
<comment type="similarity">
    <text evidence="4">Belongs to the SLU7 family.</text>
</comment>
<name>SLU7_SCHPO</name>